<protein>
    <recommendedName>
        <fullName>Early transcription factor 82 kDa subunit</fullName>
    </recommendedName>
    <alternativeName>
        <fullName>ETF large subunit</fullName>
    </alternativeName>
    <alternativeName>
        <fullName>VETF A7 subunit</fullName>
    </alternativeName>
</protein>
<proteinExistence type="inferred from homology"/>
<name>ETF2_VAR67</name>
<comment type="function">
    <text evidence="2">Acts with RNA polymerase to initiate transcription from early gene promoters. Is recruited by the RPO-associated protein of 94 kDa RAP94/OPG109 to form the early transcription complex, which also contains the core RNA polymerase. ETF heterodimer binds to early gene promoters.</text>
</comment>
<comment type="subunit">
    <text evidence="2">Heterodimer of a 70 kDa and a 82 kDa subunit. Part of the early transcription complex composed of ETF, RAP94/OPG109, and the DNA-directed RNA polymerase.</text>
</comment>
<comment type="subcellular location">
    <subcellularLocation>
        <location evidence="2">Virion</location>
    </subcellularLocation>
    <text evidence="1">All the enzymes and other proteins required to synthesize early mRNAs are packaged within the virion core along with the DNA genome. This is necessary because viral early mRNAs are synthesized within minutes after virus entry into the cell and are extruded through pores in the core particle (By similarity).</text>
</comment>
<comment type="similarity">
    <text evidence="3">Belongs to the poxviridae VETF large subunit family.</text>
</comment>
<sequence>MRYIVSPQLVLQVGKGQEVERALYLTPYDYIDEKSPIYYFLRSHLNIQQPEIVKRHILLTLRMTQLKGYLGNLLDIKDDIIIYSHKNNLEYSYVDNTIFNPFVYTQKKTLLKNDSFLYNVYPGACDFLVIWVARACDTSIPEFGSYEDVDNNIIKFETMLMDVFPQLDLDITVESKFNNIFRTNLKLTGLKKIIQRVQDLDINYKSLLSRYDEHFINMTGNHFILNDEQLNLSIWDLDGTLALSSDGDTVMINNVKLFTDLVSDIDTQMERIKGDITYKVHLATPINSRIKLDIETSFIFIETATNNILLSSDKKISIILAKNHISIKVKNHIPNIEKYFTFLVIAINAMFNSVQKSADFTKVETVYWSRICQNTKNKNRKPVIINYLDPGMKKISNNFYRSDEKEVFINDNDIMFTCMDPLGKYNKVGFLNIFHDMRKYCIPCCFLHDQSHRSTFSSCVHQIDVEKKIVSPYILNFGKVVTESKMSFLPIIFDAFLNDGMTANMEQDNKRLKETSGYHIVRCCTGNDIVRLRTTSNIIQFVNEDKNILIVNDMVYFPMNASDIGKKIHILIQEIVHEVMIVKKKESSDKIDFFPPNYKLLKDLFPKQTIQTPIQSDAGMVLTTDGFYIDGKLFNEDLSSKYVTFTKNVITSDAVAKYFSPLFKYVISEAKDRFIKTWMINIMIHMNVDPNNIIPTLEKYYPNFGRVQIN</sequence>
<dbReference type="EMBL" id="X69198">
    <property type="protein sequence ID" value="CAA49052.1"/>
    <property type="molecule type" value="Genomic_DNA"/>
</dbReference>
<dbReference type="EMBL" id="X67116">
    <property type="protein sequence ID" value="CAA47515.1"/>
    <property type="molecule type" value="Genomic_DNA"/>
</dbReference>
<dbReference type="PIR" id="H36848">
    <property type="entry name" value="H36848"/>
</dbReference>
<dbReference type="RefSeq" id="NP_042155.1">
    <property type="nucleotide sequence ID" value="NC_001611.1"/>
</dbReference>
<dbReference type="SMR" id="P0DOU7"/>
<dbReference type="GeneID" id="1486537"/>
<dbReference type="KEGG" id="vg:1486537"/>
<dbReference type="Proteomes" id="UP000002060">
    <property type="component" value="Segment"/>
</dbReference>
<dbReference type="GO" id="GO:0044423">
    <property type="term" value="C:virion component"/>
    <property type="evidence" value="ECO:0007669"/>
    <property type="project" value="UniProtKB-KW"/>
</dbReference>
<dbReference type="GO" id="GO:0003677">
    <property type="term" value="F:DNA binding"/>
    <property type="evidence" value="ECO:0007669"/>
    <property type="project" value="UniProtKB-KW"/>
</dbReference>
<dbReference type="GO" id="GO:0045893">
    <property type="term" value="P:positive regulation of DNA-templated transcription"/>
    <property type="evidence" value="ECO:0007669"/>
    <property type="project" value="InterPro"/>
</dbReference>
<dbReference type="InterPro" id="IPR007532">
    <property type="entry name" value="Poxvirus_early-TF_lsu"/>
</dbReference>
<dbReference type="Pfam" id="PF04441">
    <property type="entry name" value="Pox_VERT_large"/>
    <property type="match status" value="1"/>
</dbReference>
<feature type="chain" id="PRO_0000099083" description="Early transcription factor 82 kDa subunit">
    <location>
        <begin position="1"/>
        <end position="710"/>
    </location>
</feature>
<organism>
    <name type="scientific">Variola virus (isolate Human/India/Ind3/1967)</name>
    <name type="common">VARV</name>
    <name type="synonym">Smallpox virus</name>
    <dbReference type="NCBI Taxonomy" id="587200"/>
    <lineage>
        <taxon>Viruses</taxon>
        <taxon>Varidnaviria</taxon>
        <taxon>Bamfordvirae</taxon>
        <taxon>Nucleocytoviricota</taxon>
        <taxon>Pokkesviricetes</taxon>
        <taxon>Chitovirales</taxon>
        <taxon>Poxviridae</taxon>
        <taxon>Chordopoxvirinae</taxon>
        <taxon>Orthopoxvirus</taxon>
        <taxon>Variola virus</taxon>
    </lineage>
</organism>
<keyword id="KW-0010">Activator</keyword>
<keyword id="KW-0238">DNA-binding</keyword>
<keyword id="KW-1185">Reference proteome</keyword>
<keyword id="KW-0804">Transcription</keyword>
<keyword id="KW-0805">Transcription regulation</keyword>
<keyword id="KW-0946">Virion</keyword>
<evidence type="ECO:0000250" key="1"/>
<evidence type="ECO:0000250" key="2">
    <source>
        <dbReference type="UniProtKB" id="P20636"/>
    </source>
</evidence>
<evidence type="ECO:0000305" key="3"/>
<organismHost>
    <name type="scientific">Homo sapiens</name>
    <name type="common">Human</name>
    <dbReference type="NCBI Taxonomy" id="9606"/>
</organismHost>
<accession>P0DOU7</accession>
<accession>P33806</accession>
<accession>Q89178</accession>
<gene>
    <name type="primary">OPG133</name>
    <name type="synonym">VETFLs</name>
    <name type="ORF">A7L</name>
</gene>
<reference key="1">
    <citation type="journal article" date="1991" name="Dokl. Akad. Nauk SSSR">
        <title>Creation of a clone library of fragments from the natural variola virus and study of the structural and functional organization of viral genes from a circle of hosts.</title>
        <authorList>
            <person name="Shchelkunov S.N."/>
            <person name="Marennikova S.S."/>
            <person name="Totmenin A.V."/>
            <person name="Blinov V.M."/>
            <person name="Chizhikov V.E."/>
            <person name="Gutorov V.V."/>
            <person name="Safronov P.F."/>
            <person name="Pozdnyakov S.G."/>
            <person name="Shelukhina E.M."/>
            <person name="Gashnikov P.V."/>
            <person name="Anjaparidze O.G."/>
            <person name="Sandakhchiev L.S."/>
        </authorList>
    </citation>
    <scope>NUCLEOTIDE SEQUENCE [GENOMIC DNA]</scope>
</reference>
<reference key="2">
    <citation type="journal article" date="1993" name="FEBS Lett.">
        <title>Genes of variola and vaccinia viruses necessary to overcome the host protective mechanisms.</title>
        <authorList>
            <person name="Shchelkunov S.N."/>
            <person name="Blinov V.M."/>
            <person name="Sandakhchiev L.S."/>
        </authorList>
    </citation>
    <scope>NUCLEOTIDE SEQUENCE [LARGE SCALE GENOMIC DNA]</scope>
</reference>